<organism>
    <name type="scientific">Ehrlichia canis (strain Jake)</name>
    <dbReference type="NCBI Taxonomy" id="269484"/>
    <lineage>
        <taxon>Bacteria</taxon>
        <taxon>Pseudomonadati</taxon>
        <taxon>Pseudomonadota</taxon>
        <taxon>Alphaproteobacteria</taxon>
        <taxon>Rickettsiales</taxon>
        <taxon>Anaplasmataceae</taxon>
        <taxon>Ehrlichia</taxon>
    </lineage>
</organism>
<proteinExistence type="inferred from homology"/>
<reference key="1">
    <citation type="journal article" date="2006" name="J. Bacteriol.">
        <title>The genome of the obligately intracellular bacterium Ehrlichia canis reveals themes of complex membrane structure and immune evasion strategies.</title>
        <authorList>
            <person name="Mavromatis K."/>
            <person name="Doyle C.K."/>
            <person name="Lykidis A."/>
            <person name="Ivanova N."/>
            <person name="Francino M.P."/>
            <person name="Chain P."/>
            <person name="Shin M."/>
            <person name="Malfatti S."/>
            <person name="Larimer F."/>
            <person name="Copeland A."/>
            <person name="Detter J.C."/>
            <person name="Land M."/>
            <person name="Richardson P.M."/>
            <person name="Yu X.J."/>
            <person name="Walker D.H."/>
            <person name="McBride J.W."/>
            <person name="Kyrpides N.C."/>
        </authorList>
    </citation>
    <scope>NUCLEOTIDE SEQUENCE [LARGE SCALE GENOMIC DNA]</scope>
    <source>
        <strain>Jake</strain>
    </source>
</reference>
<feature type="chain" id="PRO_0000136156" description="Histidine--tRNA ligase">
    <location>
        <begin position="1"/>
        <end position="413"/>
    </location>
</feature>
<keyword id="KW-0030">Aminoacyl-tRNA synthetase</keyword>
<keyword id="KW-0067">ATP-binding</keyword>
<keyword id="KW-0963">Cytoplasm</keyword>
<keyword id="KW-0436">Ligase</keyword>
<keyword id="KW-0547">Nucleotide-binding</keyword>
<keyword id="KW-0648">Protein biosynthesis</keyword>
<accession>Q3YRB1</accession>
<comment type="catalytic activity">
    <reaction evidence="1">
        <text>tRNA(His) + L-histidine + ATP = L-histidyl-tRNA(His) + AMP + diphosphate + H(+)</text>
        <dbReference type="Rhea" id="RHEA:17313"/>
        <dbReference type="Rhea" id="RHEA-COMP:9665"/>
        <dbReference type="Rhea" id="RHEA-COMP:9689"/>
        <dbReference type="ChEBI" id="CHEBI:15378"/>
        <dbReference type="ChEBI" id="CHEBI:30616"/>
        <dbReference type="ChEBI" id="CHEBI:33019"/>
        <dbReference type="ChEBI" id="CHEBI:57595"/>
        <dbReference type="ChEBI" id="CHEBI:78442"/>
        <dbReference type="ChEBI" id="CHEBI:78527"/>
        <dbReference type="ChEBI" id="CHEBI:456215"/>
        <dbReference type="EC" id="6.1.1.21"/>
    </reaction>
</comment>
<comment type="subunit">
    <text evidence="1">Homodimer.</text>
</comment>
<comment type="subcellular location">
    <subcellularLocation>
        <location evidence="1">Cytoplasm</location>
    </subcellularLocation>
</comment>
<comment type="similarity">
    <text evidence="1">Belongs to the class-II aminoacyl-tRNA synthetase family.</text>
</comment>
<protein>
    <recommendedName>
        <fullName evidence="1">Histidine--tRNA ligase</fullName>
        <ecNumber evidence="1">6.1.1.21</ecNumber>
    </recommendedName>
    <alternativeName>
        <fullName evidence="1">Histidyl-tRNA synthetase</fullName>
        <shortName evidence="1">HisRS</shortName>
    </alternativeName>
</protein>
<evidence type="ECO:0000255" key="1">
    <source>
        <dbReference type="HAMAP-Rule" id="MF_00127"/>
    </source>
</evidence>
<sequence>MQRSKLKEVRGTKDLLGAEFYKFQYIQHLSQAIANRYGFIAVDTPIIEFTEVFTKTLGDDSDIVTKEMYNFQDKSGENITLRPEFTSAIVRLLINKNLVTPVKLFSSGPVFRYERPQKCRQRQFHQVNFEFFGSDSPLADVEMIALGYNILSELKLLNNITLEINFLGDKETMNSYRLSLVEYLNKYKKDLSGDSQRRLITNPLRVLDSKSPEDCEILLNAPNIGDFYTKYSSDFFTEVLDGLNDLCIPYQLNNRIVRGLDYYCNTVFEFTTSELGSQNAVIAGGRYDGLVRSMGGNDTPAVGFAMGIERVSALIDYEHKESRNVVLVPIGKDAMSYALKLAYELRCKGISVGWNYKNTGLKNMLRKINDNSIVLIFGDEELKSNTVQVKDMKTGEQQEVEKGNLLDALYNKI</sequence>
<gene>
    <name evidence="1" type="primary">hisS</name>
    <name type="ordered locus">Ecaj_0712</name>
</gene>
<name>SYH_EHRCJ</name>
<dbReference type="EC" id="6.1.1.21" evidence="1"/>
<dbReference type="EMBL" id="CP000107">
    <property type="protein sequence ID" value="AAZ68744.1"/>
    <property type="molecule type" value="Genomic_DNA"/>
</dbReference>
<dbReference type="RefSeq" id="WP_011304821.1">
    <property type="nucleotide sequence ID" value="NC_007354.1"/>
</dbReference>
<dbReference type="SMR" id="Q3YRB1"/>
<dbReference type="FunCoup" id="Q3YRB1">
    <property type="interactions" value="307"/>
</dbReference>
<dbReference type="STRING" id="269484.Ecaj_0712"/>
<dbReference type="KEGG" id="ecn:Ecaj_0712"/>
<dbReference type="eggNOG" id="COG0124">
    <property type="taxonomic scope" value="Bacteria"/>
</dbReference>
<dbReference type="HOGENOM" id="CLU_025113_1_0_5"/>
<dbReference type="InParanoid" id="Q3YRB1"/>
<dbReference type="Proteomes" id="UP000000435">
    <property type="component" value="Chromosome"/>
</dbReference>
<dbReference type="GO" id="GO:0005737">
    <property type="term" value="C:cytoplasm"/>
    <property type="evidence" value="ECO:0007669"/>
    <property type="project" value="UniProtKB-SubCell"/>
</dbReference>
<dbReference type="GO" id="GO:0005524">
    <property type="term" value="F:ATP binding"/>
    <property type="evidence" value="ECO:0007669"/>
    <property type="project" value="UniProtKB-UniRule"/>
</dbReference>
<dbReference type="GO" id="GO:0004821">
    <property type="term" value="F:histidine-tRNA ligase activity"/>
    <property type="evidence" value="ECO:0007669"/>
    <property type="project" value="UniProtKB-UniRule"/>
</dbReference>
<dbReference type="GO" id="GO:0006427">
    <property type="term" value="P:histidyl-tRNA aminoacylation"/>
    <property type="evidence" value="ECO:0007669"/>
    <property type="project" value="UniProtKB-UniRule"/>
</dbReference>
<dbReference type="CDD" id="cd00773">
    <property type="entry name" value="HisRS-like_core"/>
    <property type="match status" value="1"/>
</dbReference>
<dbReference type="CDD" id="cd00859">
    <property type="entry name" value="HisRS_anticodon"/>
    <property type="match status" value="1"/>
</dbReference>
<dbReference type="Gene3D" id="3.40.50.800">
    <property type="entry name" value="Anticodon-binding domain"/>
    <property type="match status" value="1"/>
</dbReference>
<dbReference type="Gene3D" id="3.30.930.10">
    <property type="entry name" value="Bira Bifunctional Protein, Domain 2"/>
    <property type="match status" value="1"/>
</dbReference>
<dbReference type="HAMAP" id="MF_00127">
    <property type="entry name" value="His_tRNA_synth"/>
    <property type="match status" value="1"/>
</dbReference>
<dbReference type="InterPro" id="IPR006195">
    <property type="entry name" value="aa-tRNA-synth_II"/>
</dbReference>
<dbReference type="InterPro" id="IPR045864">
    <property type="entry name" value="aa-tRNA-synth_II/BPL/LPL"/>
</dbReference>
<dbReference type="InterPro" id="IPR004154">
    <property type="entry name" value="Anticodon-bd"/>
</dbReference>
<dbReference type="InterPro" id="IPR036621">
    <property type="entry name" value="Anticodon-bd_dom_sf"/>
</dbReference>
<dbReference type="InterPro" id="IPR015807">
    <property type="entry name" value="His-tRNA-ligase"/>
</dbReference>
<dbReference type="InterPro" id="IPR041715">
    <property type="entry name" value="HisRS-like_core"/>
</dbReference>
<dbReference type="InterPro" id="IPR004516">
    <property type="entry name" value="HisRS/HisZ"/>
</dbReference>
<dbReference type="InterPro" id="IPR033656">
    <property type="entry name" value="HisRS_anticodon"/>
</dbReference>
<dbReference type="NCBIfam" id="TIGR00442">
    <property type="entry name" value="hisS"/>
    <property type="match status" value="1"/>
</dbReference>
<dbReference type="PANTHER" id="PTHR43707:SF1">
    <property type="entry name" value="HISTIDINE--TRNA LIGASE, MITOCHONDRIAL-RELATED"/>
    <property type="match status" value="1"/>
</dbReference>
<dbReference type="PANTHER" id="PTHR43707">
    <property type="entry name" value="HISTIDYL-TRNA SYNTHETASE"/>
    <property type="match status" value="1"/>
</dbReference>
<dbReference type="Pfam" id="PF03129">
    <property type="entry name" value="HGTP_anticodon"/>
    <property type="match status" value="1"/>
</dbReference>
<dbReference type="Pfam" id="PF13393">
    <property type="entry name" value="tRNA-synt_His"/>
    <property type="match status" value="1"/>
</dbReference>
<dbReference type="PIRSF" id="PIRSF001549">
    <property type="entry name" value="His-tRNA_synth"/>
    <property type="match status" value="1"/>
</dbReference>
<dbReference type="SUPFAM" id="SSF52954">
    <property type="entry name" value="Class II aaRS ABD-related"/>
    <property type="match status" value="1"/>
</dbReference>
<dbReference type="SUPFAM" id="SSF55681">
    <property type="entry name" value="Class II aaRS and biotin synthetases"/>
    <property type="match status" value="1"/>
</dbReference>
<dbReference type="PROSITE" id="PS50862">
    <property type="entry name" value="AA_TRNA_LIGASE_II"/>
    <property type="match status" value="1"/>
</dbReference>